<feature type="chain" id="PRO_1000200618" description="NAD(P)H dehydrogenase (quinone)">
    <location>
        <begin position="1"/>
        <end position="200"/>
    </location>
</feature>
<feature type="domain" description="Flavodoxin-like" evidence="1">
    <location>
        <begin position="4"/>
        <end position="191"/>
    </location>
</feature>
<feature type="binding site" evidence="1">
    <location>
        <begin position="10"/>
        <end position="15"/>
    </location>
    <ligand>
        <name>FMN</name>
        <dbReference type="ChEBI" id="CHEBI:58210"/>
    </ligand>
</feature>
<feature type="binding site" evidence="1">
    <location>
        <position position="12"/>
    </location>
    <ligand>
        <name>NAD(+)</name>
        <dbReference type="ChEBI" id="CHEBI:57540"/>
    </ligand>
</feature>
<feature type="binding site" evidence="1">
    <location>
        <begin position="79"/>
        <end position="81"/>
    </location>
    <ligand>
        <name>FMN</name>
        <dbReference type="ChEBI" id="CHEBI:58210"/>
    </ligand>
</feature>
<feature type="binding site" evidence="1">
    <location>
        <position position="99"/>
    </location>
    <ligand>
        <name>substrate</name>
    </ligand>
</feature>
<feature type="binding site" evidence="1">
    <location>
        <begin position="114"/>
        <end position="120"/>
    </location>
    <ligand>
        <name>FMN</name>
        <dbReference type="ChEBI" id="CHEBI:58210"/>
    </ligand>
</feature>
<feature type="binding site" evidence="1">
    <location>
        <position position="135"/>
    </location>
    <ligand>
        <name>FMN</name>
        <dbReference type="ChEBI" id="CHEBI:58210"/>
    </ligand>
</feature>
<accession>B4EPK7</accession>
<proteinExistence type="inferred from homology"/>
<protein>
    <recommendedName>
        <fullName evidence="1">NAD(P)H dehydrogenase (quinone)</fullName>
        <ecNumber evidence="1">1.6.5.2</ecNumber>
    </recommendedName>
    <alternativeName>
        <fullName>Flavoprotein WrbA</fullName>
    </alternativeName>
    <alternativeName>
        <fullName evidence="1">NAD(P)H:quinone oxidoreductase</fullName>
        <shortName evidence="1">NQO</shortName>
    </alternativeName>
</protein>
<name>NQOR_BURCJ</name>
<dbReference type="EC" id="1.6.5.2" evidence="1"/>
<dbReference type="EMBL" id="AM747722">
    <property type="protein sequence ID" value="CAR57023.1"/>
    <property type="molecule type" value="Genomic_DNA"/>
</dbReference>
<dbReference type="SMR" id="B4EPK7"/>
<dbReference type="KEGG" id="bcj:BCAS0090"/>
<dbReference type="eggNOG" id="COG0655">
    <property type="taxonomic scope" value="Bacteria"/>
</dbReference>
<dbReference type="HOGENOM" id="CLU_051402_0_2_4"/>
<dbReference type="BioCyc" id="BCEN216591:G1G1V-7062-MONOMER"/>
<dbReference type="Proteomes" id="UP000001035">
    <property type="component" value="Chromosome 3"/>
</dbReference>
<dbReference type="GO" id="GO:0016020">
    <property type="term" value="C:membrane"/>
    <property type="evidence" value="ECO:0007669"/>
    <property type="project" value="TreeGrafter"/>
</dbReference>
<dbReference type="GO" id="GO:0050660">
    <property type="term" value="F:flavin adenine dinucleotide binding"/>
    <property type="evidence" value="ECO:0007669"/>
    <property type="project" value="UniProtKB-UniRule"/>
</dbReference>
<dbReference type="GO" id="GO:0010181">
    <property type="term" value="F:FMN binding"/>
    <property type="evidence" value="ECO:0007669"/>
    <property type="project" value="InterPro"/>
</dbReference>
<dbReference type="GO" id="GO:0051287">
    <property type="term" value="F:NAD binding"/>
    <property type="evidence" value="ECO:0007669"/>
    <property type="project" value="UniProtKB-UniRule"/>
</dbReference>
<dbReference type="GO" id="GO:0050136">
    <property type="term" value="F:NADH:ubiquinone reductase (non-electrogenic) activity"/>
    <property type="evidence" value="ECO:0007669"/>
    <property type="project" value="RHEA"/>
</dbReference>
<dbReference type="GO" id="GO:0050661">
    <property type="term" value="F:NADP binding"/>
    <property type="evidence" value="ECO:0007669"/>
    <property type="project" value="UniProtKB-UniRule"/>
</dbReference>
<dbReference type="GO" id="GO:0008753">
    <property type="term" value="F:NADPH dehydrogenase (quinone) activity"/>
    <property type="evidence" value="ECO:0007669"/>
    <property type="project" value="RHEA"/>
</dbReference>
<dbReference type="FunFam" id="3.40.50.360:FF:000001">
    <property type="entry name" value="NAD(P)H dehydrogenase (Quinone) FQR1-like"/>
    <property type="match status" value="1"/>
</dbReference>
<dbReference type="Gene3D" id="3.40.50.360">
    <property type="match status" value="1"/>
</dbReference>
<dbReference type="HAMAP" id="MF_01017">
    <property type="entry name" value="NQOR"/>
    <property type="match status" value="1"/>
</dbReference>
<dbReference type="InterPro" id="IPR008254">
    <property type="entry name" value="Flavodoxin/NO_synth"/>
</dbReference>
<dbReference type="InterPro" id="IPR029039">
    <property type="entry name" value="Flavoprotein-like_sf"/>
</dbReference>
<dbReference type="InterPro" id="IPR010089">
    <property type="entry name" value="Flavoprotein_WrbA-like"/>
</dbReference>
<dbReference type="InterPro" id="IPR005025">
    <property type="entry name" value="FMN_Rdtase-like_dom"/>
</dbReference>
<dbReference type="InterPro" id="IPR037513">
    <property type="entry name" value="NQO"/>
</dbReference>
<dbReference type="NCBIfam" id="TIGR01755">
    <property type="entry name" value="flav_wrbA"/>
    <property type="match status" value="1"/>
</dbReference>
<dbReference type="NCBIfam" id="NF002999">
    <property type="entry name" value="PRK03767.1"/>
    <property type="match status" value="1"/>
</dbReference>
<dbReference type="PANTHER" id="PTHR30546">
    <property type="entry name" value="FLAVODOXIN-RELATED PROTEIN WRBA-RELATED"/>
    <property type="match status" value="1"/>
</dbReference>
<dbReference type="PANTHER" id="PTHR30546:SF23">
    <property type="entry name" value="FLAVOPROTEIN-LIKE PROTEIN YCP4-RELATED"/>
    <property type="match status" value="1"/>
</dbReference>
<dbReference type="Pfam" id="PF03358">
    <property type="entry name" value="FMN_red"/>
    <property type="match status" value="1"/>
</dbReference>
<dbReference type="SUPFAM" id="SSF52218">
    <property type="entry name" value="Flavoproteins"/>
    <property type="match status" value="1"/>
</dbReference>
<dbReference type="PROSITE" id="PS50902">
    <property type="entry name" value="FLAVODOXIN_LIKE"/>
    <property type="match status" value="1"/>
</dbReference>
<reference key="1">
    <citation type="journal article" date="2009" name="J. Bacteriol.">
        <title>The genome of Burkholderia cenocepacia J2315, an epidemic pathogen of cystic fibrosis patients.</title>
        <authorList>
            <person name="Holden M.T."/>
            <person name="Seth-Smith H.M."/>
            <person name="Crossman L.C."/>
            <person name="Sebaihia M."/>
            <person name="Bentley S.D."/>
            <person name="Cerdeno-Tarraga A.M."/>
            <person name="Thomson N.R."/>
            <person name="Bason N."/>
            <person name="Quail M.A."/>
            <person name="Sharp S."/>
            <person name="Cherevach I."/>
            <person name="Churcher C."/>
            <person name="Goodhead I."/>
            <person name="Hauser H."/>
            <person name="Holroyd N."/>
            <person name="Mungall K."/>
            <person name="Scott P."/>
            <person name="Walker D."/>
            <person name="White B."/>
            <person name="Rose H."/>
            <person name="Iversen P."/>
            <person name="Mil-Homens D."/>
            <person name="Rocha E.P."/>
            <person name="Fialho A.M."/>
            <person name="Baldwin A."/>
            <person name="Dowson C."/>
            <person name="Barrell B.G."/>
            <person name="Govan J.R."/>
            <person name="Vandamme P."/>
            <person name="Hart C.A."/>
            <person name="Mahenthiralingam E."/>
            <person name="Parkhill J."/>
        </authorList>
    </citation>
    <scope>NUCLEOTIDE SEQUENCE [LARGE SCALE GENOMIC DNA]</scope>
    <source>
        <strain>ATCC BAA-245 / DSM 16553 / LMG 16656 / NCTC 13227 / J2315 / CF5610</strain>
    </source>
</reference>
<keyword id="KW-0285">Flavoprotein</keyword>
<keyword id="KW-0288">FMN</keyword>
<keyword id="KW-0520">NAD</keyword>
<keyword id="KW-0521">NADP</keyword>
<keyword id="KW-0547">Nucleotide-binding</keyword>
<keyword id="KW-0560">Oxidoreductase</keyword>
<organism>
    <name type="scientific">Burkholderia cenocepacia (strain ATCC BAA-245 / DSM 16553 / LMG 16656 / NCTC 13227 / J2315 / CF5610)</name>
    <name type="common">Burkholderia cepacia (strain J2315)</name>
    <dbReference type="NCBI Taxonomy" id="216591"/>
    <lineage>
        <taxon>Bacteria</taxon>
        <taxon>Pseudomonadati</taxon>
        <taxon>Pseudomonadota</taxon>
        <taxon>Betaproteobacteria</taxon>
        <taxon>Burkholderiales</taxon>
        <taxon>Burkholderiaceae</taxon>
        <taxon>Burkholderia</taxon>
        <taxon>Burkholderia cepacia complex</taxon>
    </lineage>
</organism>
<comment type="catalytic activity">
    <reaction evidence="1">
        <text>a quinone + NADH + H(+) = a quinol + NAD(+)</text>
        <dbReference type="Rhea" id="RHEA:46160"/>
        <dbReference type="ChEBI" id="CHEBI:15378"/>
        <dbReference type="ChEBI" id="CHEBI:24646"/>
        <dbReference type="ChEBI" id="CHEBI:57540"/>
        <dbReference type="ChEBI" id="CHEBI:57945"/>
        <dbReference type="ChEBI" id="CHEBI:132124"/>
        <dbReference type="EC" id="1.6.5.2"/>
    </reaction>
</comment>
<comment type="catalytic activity">
    <reaction evidence="1">
        <text>a quinone + NADPH + H(+) = a quinol + NADP(+)</text>
        <dbReference type="Rhea" id="RHEA:46164"/>
        <dbReference type="ChEBI" id="CHEBI:15378"/>
        <dbReference type="ChEBI" id="CHEBI:24646"/>
        <dbReference type="ChEBI" id="CHEBI:57783"/>
        <dbReference type="ChEBI" id="CHEBI:58349"/>
        <dbReference type="ChEBI" id="CHEBI:132124"/>
        <dbReference type="EC" id="1.6.5.2"/>
    </reaction>
</comment>
<comment type="cofactor">
    <cofactor evidence="1">
        <name>FMN</name>
        <dbReference type="ChEBI" id="CHEBI:58210"/>
    </cofactor>
    <text evidence="1">Binds 1 FMN per monomer.</text>
</comment>
<comment type="similarity">
    <text evidence="1">Belongs to the WrbA family.</text>
</comment>
<gene>
    <name type="ordered locus">BceJ2315_63650</name>
    <name type="ORF">BCAS0090</name>
</gene>
<evidence type="ECO:0000255" key="1">
    <source>
        <dbReference type="HAMAP-Rule" id="MF_01017"/>
    </source>
</evidence>
<sequence>MAKVLVLYYSSYGHVETMAQHIVEGAKSVPGVEVTLKRVPETIPVDQARAIGVKVDQAAPVATVDELADYDAIIFGTPTRFGNMAGQMRTFLDQTGGLWMKGALVGKIGSVFASTGTQHGGQETTITSFHTTLLHHGMVIVGVPYACSGLVNMNEITGGTPYGATTLAGADGSRQPSANELDIARYQGKHVAELANKLAS</sequence>